<comment type="function">
    <text evidence="1">This protein is one of the early assembly proteins of the 50S ribosomal subunit, although it is not seen to bind rRNA by itself. It is important during the early stages of 50S assembly.</text>
</comment>
<comment type="subunit">
    <text evidence="1">Part of the 50S ribosomal subunit.</text>
</comment>
<comment type="similarity">
    <text evidence="1">Belongs to the universal ribosomal protein uL13 family.</text>
</comment>
<accession>B7J1R4</accession>
<keyword id="KW-0687">Ribonucleoprotein</keyword>
<keyword id="KW-0689">Ribosomal protein</keyword>
<feature type="chain" id="PRO_1000144093" description="Large ribosomal subunit protein uL13">
    <location>
        <begin position="1"/>
        <end position="146"/>
    </location>
</feature>
<organism>
    <name type="scientific">Borreliella burgdorferi (strain ZS7)</name>
    <name type="common">Borrelia burgdorferi</name>
    <dbReference type="NCBI Taxonomy" id="445985"/>
    <lineage>
        <taxon>Bacteria</taxon>
        <taxon>Pseudomonadati</taxon>
        <taxon>Spirochaetota</taxon>
        <taxon>Spirochaetia</taxon>
        <taxon>Spirochaetales</taxon>
        <taxon>Borreliaceae</taxon>
        <taxon>Borreliella</taxon>
    </lineage>
</organism>
<name>RL13_BORBZ</name>
<evidence type="ECO:0000255" key="1">
    <source>
        <dbReference type="HAMAP-Rule" id="MF_01366"/>
    </source>
</evidence>
<evidence type="ECO:0000305" key="2"/>
<proteinExistence type="inferred from homology"/>
<gene>
    <name evidence="1" type="primary">rplM</name>
    <name type="ordered locus">BbuZS7_0343</name>
</gene>
<sequence>MNKITNNDTIWIKPKTVEKKWYVIDAADRILGKVAVDVVKILRGKHKAYYTPHQDLGDNVIIINASKVKLTGKKYQQKLYYRHSRYPGGLYSDTFRTLSERKPCAPLEIAIKGMLPKGPLGRNLFRNLKVFSGSEHTLKAQNPIKL</sequence>
<reference key="1">
    <citation type="journal article" date="2011" name="J. Bacteriol.">
        <title>Whole-genome sequences of thirteen isolates of Borrelia burgdorferi.</title>
        <authorList>
            <person name="Schutzer S.E."/>
            <person name="Fraser-Liggett C.M."/>
            <person name="Casjens S.R."/>
            <person name="Qiu W.G."/>
            <person name="Dunn J.J."/>
            <person name="Mongodin E.F."/>
            <person name="Luft B.J."/>
        </authorList>
    </citation>
    <scope>NUCLEOTIDE SEQUENCE [LARGE SCALE GENOMIC DNA]</scope>
    <source>
        <strain>ZS7</strain>
    </source>
</reference>
<dbReference type="EMBL" id="CP001205">
    <property type="protein sequence ID" value="ACK75078.1"/>
    <property type="molecule type" value="Genomic_DNA"/>
</dbReference>
<dbReference type="RefSeq" id="WP_002556936.1">
    <property type="nucleotide sequence ID" value="NC_011728.1"/>
</dbReference>
<dbReference type="SMR" id="B7J1R4"/>
<dbReference type="GeneID" id="56567768"/>
<dbReference type="KEGG" id="bbz:BbuZS7_0343"/>
<dbReference type="HOGENOM" id="CLU_082184_2_2_12"/>
<dbReference type="Proteomes" id="UP000006901">
    <property type="component" value="Chromosome"/>
</dbReference>
<dbReference type="GO" id="GO:0022625">
    <property type="term" value="C:cytosolic large ribosomal subunit"/>
    <property type="evidence" value="ECO:0007669"/>
    <property type="project" value="TreeGrafter"/>
</dbReference>
<dbReference type="GO" id="GO:0003729">
    <property type="term" value="F:mRNA binding"/>
    <property type="evidence" value="ECO:0007669"/>
    <property type="project" value="TreeGrafter"/>
</dbReference>
<dbReference type="GO" id="GO:0003735">
    <property type="term" value="F:structural constituent of ribosome"/>
    <property type="evidence" value="ECO:0007669"/>
    <property type="project" value="InterPro"/>
</dbReference>
<dbReference type="GO" id="GO:0017148">
    <property type="term" value="P:negative regulation of translation"/>
    <property type="evidence" value="ECO:0007669"/>
    <property type="project" value="TreeGrafter"/>
</dbReference>
<dbReference type="GO" id="GO:0006412">
    <property type="term" value="P:translation"/>
    <property type="evidence" value="ECO:0007669"/>
    <property type="project" value="UniProtKB-UniRule"/>
</dbReference>
<dbReference type="CDD" id="cd00392">
    <property type="entry name" value="Ribosomal_L13"/>
    <property type="match status" value="1"/>
</dbReference>
<dbReference type="Gene3D" id="3.90.1180.10">
    <property type="entry name" value="Ribosomal protein L13"/>
    <property type="match status" value="1"/>
</dbReference>
<dbReference type="HAMAP" id="MF_01366">
    <property type="entry name" value="Ribosomal_uL13"/>
    <property type="match status" value="1"/>
</dbReference>
<dbReference type="InterPro" id="IPR005822">
    <property type="entry name" value="Ribosomal_uL13"/>
</dbReference>
<dbReference type="InterPro" id="IPR005823">
    <property type="entry name" value="Ribosomal_uL13_bac-type"/>
</dbReference>
<dbReference type="InterPro" id="IPR023563">
    <property type="entry name" value="Ribosomal_uL13_CS"/>
</dbReference>
<dbReference type="InterPro" id="IPR036899">
    <property type="entry name" value="Ribosomal_uL13_sf"/>
</dbReference>
<dbReference type="NCBIfam" id="TIGR01066">
    <property type="entry name" value="rplM_bact"/>
    <property type="match status" value="1"/>
</dbReference>
<dbReference type="PANTHER" id="PTHR11545:SF2">
    <property type="entry name" value="LARGE RIBOSOMAL SUBUNIT PROTEIN UL13M"/>
    <property type="match status" value="1"/>
</dbReference>
<dbReference type="PANTHER" id="PTHR11545">
    <property type="entry name" value="RIBOSOMAL PROTEIN L13"/>
    <property type="match status" value="1"/>
</dbReference>
<dbReference type="Pfam" id="PF00572">
    <property type="entry name" value="Ribosomal_L13"/>
    <property type="match status" value="1"/>
</dbReference>
<dbReference type="PIRSF" id="PIRSF002181">
    <property type="entry name" value="Ribosomal_L13"/>
    <property type="match status" value="1"/>
</dbReference>
<dbReference type="SUPFAM" id="SSF52161">
    <property type="entry name" value="Ribosomal protein L13"/>
    <property type="match status" value="1"/>
</dbReference>
<dbReference type="PROSITE" id="PS00783">
    <property type="entry name" value="RIBOSOMAL_L13"/>
    <property type="match status" value="1"/>
</dbReference>
<protein>
    <recommendedName>
        <fullName evidence="1">Large ribosomal subunit protein uL13</fullName>
    </recommendedName>
    <alternativeName>
        <fullName evidence="2">50S ribosomal protein L13</fullName>
    </alternativeName>
</protein>